<sequence>MEDFVRQCFNPMIVELAEKTMKEYGENPKIETNKFAAICTHMEVCFMYSDFHFINERGESIIVEPGDSNALLKHRFEIIEGRDRNVAWTVVNSICNTTGVGKPKFLPDLYDYKEDRFIEIGVTRREVHVYYLEKANKIKSEETHIHIFSFTGEEMATKADYTLDEESRARIKTRLFTIRQEMASRGLWDSFRQSERGEETIEERFEITGTMRRLADQSLPPNFSSLENFRAYVDGFEPNGYIEGKLSQMSREVNARIEPFLKTTPRPLRLPCGPPCFQRSKFLLMDALKLNIEDPSHEGEGIPLYDAVRCMKTFFGWKEPTIVKPHEKGINSNYLLAWKQVLAEIQDIEDEKKIPRIKNMKKTSPLKWALGENMAPEKVDFDDCKDVSDLKQYDSDEPEFRSLASWIQNEFNKACELTDSSWLELDEIGEDVAPIEHIASMRRNYFTAEVSHCRATEYIMKGVYINTALLNASCAAMDDFQLIPMISKCRTKEGRRKTNLYGFIIKGRSHLRNDTDVVNFVSMEFSLTDPRLEPHKWEKYCILEIGDMVLRTAIGQVARPMFLYVRTNGTSKIKMKWGMEMRRCLLQSLQQIESMIEAESSVKEKDMTKEFFENKSETWPIGESPKGVEEGSIGKVCRTLLAKSVFNCLYASPQLEGFSAESRKLLLIVQALRDNLEPGTFDLGGLYESIEECLINDPWVLLNASWFNSFLTHALR</sequence>
<accession>B3EUR3</accession>
<organism>
    <name type="scientific">Influenza A virus (strain A/Swine/Wisconsin/1/1961 H1N1)</name>
    <dbReference type="NCBI Taxonomy" id="383533"/>
    <lineage>
        <taxon>Viruses</taxon>
        <taxon>Riboviria</taxon>
        <taxon>Orthornavirae</taxon>
        <taxon>Negarnaviricota</taxon>
        <taxon>Polyploviricotina</taxon>
        <taxon>Insthoviricetes</taxon>
        <taxon>Articulavirales</taxon>
        <taxon>Orthomyxoviridae</taxon>
        <taxon>Alphainfluenzavirus</taxon>
        <taxon>Alphainfluenzavirus influenzae</taxon>
        <taxon>Influenza A virus</taxon>
    </lineage>
</organism>
<dbReference type="EC" id="3.1.-.-" evidence="2"/>
<dbReference type="EMBL" id="CY032218">
    <property type="protein sequence ID" value="ACD85161.1"/>
    <property type="molecule type" value="Viral_cRNA"/>
</dbReference>
<dbReference type="SMR" id="B3EUR3"/>
<dbReference type="MEROPS" id="S62.001"/>
<dbReference type="Proteomes" id="UP000007769">
    <property type="component" value="Genome"/>
</dbReference>
<dbReference type="GO" id="GO:0030430">
    <property type="term" value="C:host cell cytoplasm"/>
    <property type="evidence" value="ECO:0007669"/>
    <property type="project" value="UniProtKB-SubCell"/>
</dbReference>
<dbReference type="GO" id="GO:0042025">
    <property type="term" value="C:host cell nucleus"/>
    <property type="evidence" value="ECO:0007669"/>
    <property type="project" value="UniProtKB-SubCell"/>
</dbReference>
<dbReference type="GO" id="GO:0004519">
    <property type="term" value="F:endonuclease activity"/>
    <property type="evidence" value="ECO:0007669"/>
    <property type="project" value="UniProtKB-KW"/>
</dbReference>
<dbReference type="GO" id="GO:0046872">
    <property type="term" value="F:metal ion binding"/>
    <property type="evidence" value="ECO:0007669"/>
    <property type="project" value="UniProtKB-KW"/>
</dbReference>
<dbReference type="GO" id="GO:0003723">
    <property type="term" value="F:RNA binding"/>
    <property type="evidence" value="ECO:0007669"/>
    <property type="project" value="UniProtKB-UniRule"/>
</dbReference>
<dbReference type="GO" id="GO:0075526">
    <property type="term" value="P:cap snatching"/>
    <property type="evidence" value="ECO:0007669"/>
    <property type="project" value="UniProtKB-UniRule"/>
</dbReference>
<dbReference type="GO" id="GO:0006351">
    <property type="term" value="P:DNA-templated transcription"/>
    <property type="evidence" value="ECO:0007669"/>
    <property type="project" value="UniProtKB-UniRule"/>
</dbReference>
<dbReference type="GO" id="GO:0039657">
    <property type="term" value="P:symbiont-mediated suppression of host gene expression"/>
    <property type="evidence" value="ECO:0007669"/>
    <property type="project" value="UniProtKB-KW"/>
</dbReference>
<dbReference type="GO" id="GO:0039523">
    <property type="term" value="P:symbiont-mediated suppression of host mRNA transcription via inhibition of RNA polymerase II activity"/>
    <property type="evidence" value="ECO:0007669"/>
    <property type="project" value="UniProtKB-UniRule"/>
</dbReference>
<dbReference type="GO" id="GO:0039694">
    <property type="term" value="P:viral RNA genome replication"/>
    <property type="evidence" value="ECO:0007669"/>
    <property type="project" value="InterPro"/>
</dbReference>
<dbReference type="GO" id="GO:0075523">
    <property type="term" value="P:viral translational frameshifting"/>
    <property type="evidence" value="ECO:0007669"/>
    <property type="project" value="UniProtKB-KW"/>
</dbReference>
<dbReference type="FunFam" id="3.40.91.90:FF:000001">
    <property type="entry name" value="Polymerase acidic protein"/>
    <property type="match status" value="1"/>
</dbReference>
<dbReference type="Gene3D" id="3.40.91.90">
    <property type="entry name" value="Influenza RNA-dependent RNA polymerase subunit PA, endonuclease domain"/>
    <property type="match status" value="1"/>
</dbReference>
<dbReference type="HAMAP" id="MF_04063">
    <property type="entry name" value="INFV_PA"/>
    <property type="match status" value="1"/>
</dbReference>
<dbReference type="InterPro" id="IPR037534">
    <property type="entry name" value="INFV_PA"/>
</dbReference>
<dbReference type="InterPro" id="IPR001009">
    <property type="entry name" value="PA/PA-X"/>
</dbReference>
<dbReference type="InterPro" id="IPR038372">
    <property type="entry name" value="PA/PA-X_sf"/>
</dbReference>
<dbReference type="Pfam" id="PF00603">
    <property type="entry name" value="Flu_PA"/>
    <property type="match status" value="1"/>
</dbReference>
<organismHost>
    <name type="scientific">Aves</name>
    <dbReference type="NCBI Taxonomy" id="8782"/>
</organismHost>
<organismHost>
    <name type="scientific">Homo sapiens</name>
    <name type="common">Human</name>
    <dbReference type="NCBI Taxonomy" id="9606"/>
</organismHost>
<organismHost>
    <name type="scientific">Sus scrofa</name>
    <name type="common">Pig</name>
    <dbReference type="NCBI Taxonomy" id="9823"/>
</organismHost>
<gene>
    <name evidence="2" type="primary">PA</name>
</gene>
<name>PA_I61A1</name>
<reference key="1">
    <citation type="submission" date="2008-06" db="EMBL/GenBank/DDBJ databases">
        <title>The NIAID influenza genome sequencing project.</title>
        <authorList>
            <person name="Spiro D."/>
            <person name="Halpin R."/>
            <person name="Boyne A."/>
            <person name="Bera J."/>
            <person name="Ghedin E."/>
            <person name="Hostetler J."/>
            <person name="Fedorova N."/>
            <person name="Kim M."/>
            <person name="Zaborsky J."/>
            <person name="Overton L."/>
            <person name="Djuric K."/>
            <person name="Sarmiento M."/>
            <person name="Sitz J."/>
            <person name="Katzel D."/>
            <person name="Webster R.G."/>
            <person name="Hoffmann E."/>
            <person name="Krauss S."/>
            <person name="Naeve C."/>
            <person name="Bolotov P."/>
            <person name="Bao Y."/>
            <person name="Sanders R."/>
            <person name="Dernovoy D."/>
            <person name="Kiryutin B."/>
            <person name="Lipman D.J."/>
            <person name="Tatusova T."/>
        </authorList>
    </citation>
    <scope>NUCLEOTIDE SEQUENCE [GENOMIC RNA]</scope>
</reference>
<reference key="2">
    <citation type="submission" date="2008-06" db="EMBL/GenBank/DDBJ databases">
        <authorList>
            <consortium name="The NIAID Influenza Genome Sequencing Consortium"/>
        </authorList>
    </citation>
    <scope>NUCLEOTIDE SEQUENCE [GENOMIC RNA]</scope>
</reference>
<feature type="chain" id="PRO_0000373003" description="Polymerase acidic protein">
    <location>
        <begin position="1"/>
        <end position="716"/>
    </location>
</feature>
<feature type="short sequence motif" description="Nuclear localization signal 1 (NLS1)" evidence="1 2">
    <location>
        <begin position="124"/>
        <end position="139"/>
    </location>
</feature>
<feature type="short sequence motif" description="Nuclear localization signal 2 (NLS2)" evidence="1 2">
    <location>
        <begin position="184"/>
        <end position="247"/>
    </location>
</feature>
<feature type="binding site" evidence="2">
    <location>
        <position position="41"/>
    </location>
    <ligand>
        <name>Mn(2+)</name>
        <dbReference type="ChEBI" id="CHEBI:29035"/>
        <label>1</label>
    </ligand>
</feature>
<feature type="binding site" evidence="2">
    <location>
        <position position="80"/>
    </location>
    <ligand>
        <name>Mn(2+)</name>
        <dbReference type="ChEBI" id="CHEBI:29035"/>
        <label>2</label>
    </ligand>
</feature>
<feature type="binding site" evidence="2">
    <location>
        <position position="108"/>
    </location>
    <ligand>
        <name>Mn(2+)</name>
        <dbReference type="ChEBI" id="CHEBI:29035"/>
        <label>1</label>
    </ligand>
</feature>
<feature type="binding site" evidence="2">
    <location>
        <position position="108"/>
    </location>
    <ligand>
        <name>Mn(2+)</name>
        <dbReference type="ChEBI" id="CHEBI:29035"/>
        <label>2</label>
    </ligand>
</feature>
<feature type="binding site" evidence="2">
    <location>
        <position position="119"/>
    </location>
    <ligand>
        <name>Mn(2+)</name>
        <dbReference type="ChEBI" id="CHEBI:29035"/>
        <label>1</label>
    </ligand>
</feature>
<feature type="binding site" evidence="2">
    <location>
        <position position="120"/>
    </location>
    <ligand>
        <name>Mn(2+)</name>
        <dbReference type="ChEBI" id="CHEBI:29035"/>
        <label>1</label>
    </ligand>
</feature>
<protein>
    <recommendedName>
        <fullName evidence="2">Polymerase acidic protein</fullName>
        <ecNumber evidence="2">3.1.-.-</ecNumber>
    </recommendedName>
    <alternativeName>
        <fullName evidence="2">RNA-directed RNA polymerase subunit P2</fullName>
    </alternativeName>
</protein>
<comment type="function">
    <text evidence="2">Plays an essential role in viral RNA transcription and replication by forming the heterotrimeric polymerase complex together with PB1 and PB2 subunits. The complex transcribes viral mRNAs by using a unique mechanism called cap-snatching. It consists in the hijacking and cleavage of host capped pre-mRNAs. These short capped RNAs are then used as primers for viral mRNAs. The PB2 subunit is responsible for the binding of the 5' cap of cellular pre-mRNAs which are subsequently cleaved after 10-13 nucleotides by the PA subunit that carries the endonuclease activity.</text>
</comment>
<comment type="cofactor">
    <cofactor evidence="2">
        <name>Mn(2+)</name>
        <dbReference type="ChEBI" id="CHEBI:29035"/>
    </cofactor>
    <text evidence="2">Binds 2 manganese ions per subunit.</text>
</comment>
<comment type="subunit">
    <text evidence="1 2">Influenza RNA polymerase is composed of three subunits: PB1, PB2 and PA. Interacts (via C-terminus) with PB1 (via N-terminus).</text>
</comment>
<comment type="subcellular location">
    <subcellularLocation>
        <location evidence="2">Host cytoplasm</location>
    </subcellularLocation>
    <subcellularLocation>
        <location evidence="2">Host nucleus</location>
    </subcellularLocation>
    <text evidence="1 2">PB1 and PA are transported in the host nucleus as a complex.</text>
</comment>
<comment type="alternative products">
    <event type="ribosomal frameshifting"/>
    <isoform>
        <id>B3EUR3-1</id>
        <name>PA</name>
        <sequence type="displayed"/>
    </isoform>
    <isoform>
        <id>P0DJV2-1</id>
        <name>PA-X</name>
        <sequence type="external"/>
    </isoform>
</comment>
<comment type="PTM">
    <text evidence="1 2">Phosphorylated on serines and threonines by host kinases, including human casein kinase II.</text>
</comment>
<comment type="similarity">
    <text evidence="2">Belongs to the influenza viruses PA family.</text>
</comment>
<evidence type="ECO:0000250" key="1">
    <source>
        <dbReference type="UniProtKB" id="P03433"/>
    </source>
</evidence>
<evidence type="ECO:0000255" key="2">
    <source>
        <dbReference type="HAMAP-Rule" id="MF_04063"/>
    </source>
</evidence>
<keyword id="KW-1157">Cap snatching</keyword>
<keyword id="KW-0255">Endonuclease</keyword>
<keyword id="KW-1262">Eukaryotic host gene expression shutoff by virus</keyword>
<keyword id="KW-1191">Eukaryotic host transcription shutoff by virus</keyword>
<keyword id="KW-1035">Host cytoplasm</keyword>
<keyword id="KW-1190">Host gene expression shutoff by virus</keyword>
<keyword id="KW-1048">Host nucleus</keyword>
<keyword id="KW-0945">Host-virus interaction</keyword>
<keyword id="KW-0378">Hydrolase</keyword>
<keyword id="KW-1104">Inhibition of host RNA polymerase II by virus</keyword>
<keyword id="KW-0464">Manganese</keyword>
<keyword id="KW-0479">Metal-binding</keyword>
<keyword id="KW-0540">Nuclease</keyword>
<keyword id="KW-0597">Phosphoprotein</keyword>
<keyword id="KW-0688">Ribosomal frameshifting</keyword>
<proteinExistence type="inferred from homology"/>